<name>CPB3_CAEEL</name>
<evidence type="ECO:0000250" key="1"/>
<evidence type="ECO:0000256" key="2">
    <source>
        <dbReference type="SAM" id="MobiDB-lite"/>
    </source>
</evidence>
<evidence type="ECO:0000269" key="3">
    <source>
    </source>
</evidence>
<keyword id="KW-1185">Reference proteome</keyword>
<keyword id="KW-0694">RNA-binding</keyword>
<gene>
    <name type="primary">cpb-3</name>
    <name type="ORF">B0414.5</name>
</gene>
<proteinExistence type="evidence at transcript level"/>
<feature type="chain" id="PRO_0000081517" description="Cytoplasmic polyadenylation element-binding protein 3">
    <location>
        <begin position="1"/>
        <end position="745"/>
    </location>
</feature>
<feature type="domain" description="RRM">
    <location>
        <begin position="297"/>
        <end position="319"/>
    </location>
</feature>
<feature type="region of interest" description="Disordered" evidence="2">
    <location>
        <begin position="1"/>
        <end position="45"/>
    </location>
</feature>
<feature type="region of interest" description="Disordered" evidence="2">
    <location>
        <begin position="94"/>
        <end position="180"/>
    </location>
</feature>
<feature type="region of interest" description="Disordered" evidence="2">
    <location>
        <begin position="204"/>
        <end position="283"/>
    </location>
</feature>
<feature type="compositionally biased region" description="Basic and acidic residues" evidence="2">
    <location>
        <begin position="162"/>
        <end position="175"/>
    </location>
</feature>
<feature type="compositionally biased region" description="Polar residues" evidence="2">
    <location>
        <begin position="219"/>
        <end position="229"/>
    </location>
</feature>
<feature type="compositionally biased region" description="Low complexity" evidence="2">
    <location>
        <begin position="230"/>
        <end position="240"/>
    </location>
</feature>
<feature type="compositionally biased region" description="Polar residues" evidence="2">
    <location>
        <begin position="241"/>
        <end position="255"/>
    </location>
</feature>
<feature type="compositionally biased region" description="Basic and acidic residues" evidence="2">
    <location>
        <begin position="264"/>
        <end position="276"/>
    </location>
</feature>
<protein>
    <recommendedName>
        <fullName>Cytoplasmic polyadenylation element-binding protein 3</fullName>
    </recommendedName>
</protein>
<comment type="function">
    <text evidence="1 3">Cytoplasmic polyadenylation element binding protein that binds to and regulates the translation of specific mRNAs (By similarity). May not be required for oogenesis.</text>
</comment>
<comment type="developmental stage">
    <text evidence="3">Expressed maternally in oocytes.</text>
</comment>
<dbReference type="EMBL" id="FO080197">
    <property type="protein sequence ID" value="CCD61905.1"/>
    <property type="molecule type" value="Genomic_DNA"/>
</dbReference>
<dbReference type="PIR" id="T15230">
    <property type="entry name" value="T15230"/>
</dbReference>
<dbReference type="RefSeq" id="NP_491680.2">
    <property type="nucleotide sequence ID" value="NM_059279.8"/>
</dbReference>
<dbReference type="SMR" id="O01835"/>
<dbReference type="BioGRID" id="37699">
    <property type="interactions" value="4"/>
</dbReference>
<dbReference type="FunCoup" id="O01835">
    <property type="interactions" value="4"/>
</dbReference>
<dbReference type="STRING" id="6239.B0414.5.1"/>
<dbReference type="iPTMnet" id="O01835"/>
<dbReference type="PaxDb" id="6239-B0414.5"/>
<dbReference type="PeptideAtlas" id="O01835"/>
<dbReference type="EnsemblMetazoa" id="B0414.5.1">
    <property type="protein sequence ID" value="B0414.5.1"/>
    <property type="gene ID" value="WBGene00000772"/>
</dbReference>
<dbReference type="GeneID" id="172244"/>
<dbReference type="KEGG" id="cel:CELE_B0414.5"/>
<dbReference type="UCSC" id="B0414.5">
    <property type="organism name" value="c. elegans"/>
</dbReference>
<dbReference type="AGR" id="WB:WBGene00000772"/>
<dbReference type="CTD" id="172244"/>
<dbReference type="WormBase" id="B0414.5">
    <property type="protein sequence ID" value="CE41548"/>
    <property type="gene ID" value="WBGene00000772"/>
    <property type="gene designation" value="cpb-3"/>
</dbReference>
<dbReference type="eggNOG" id="KOG0129">
    <property type="taxonomic scope" value="Eukaryota"/>
</dbReference>
<dbReference type="GeneTree" id="ENSGT00940000155524"/>
<dbReference type="HOGENOM" id="CLU_377774_0_0_1"/>
<dbReference type="InParanoid" id="O01835"/>
<dbReference type="OMA" id="MFCEDES"/>
<dbReference type="OrthoDB" id="10033548at2759"/>
<dbReference type="PRO" id="PR:O01835"/>
<dbReference type="Proteomes" id="UP000001940">
    <property type="component" value="Chromosome I"/>
</dbReference>
<dbReference type="Bgee" id="WBGene00000772">
    <property type="expression patterns" value="Expressed in germ line (C elegans) and 3 other cell types or tissues"/>
</dbReference>
<dbReference type="GO" id="GO:0005737">
    <property type="term" value="C:cytoplasm"/>
    <property type="evidence" value="ECO:0000318"/>
    <property type="project" value="GO_Central"/>
</dbReference>
<dbReference type="GO" id="GO:0043005">
    <property type="term" value="C:neuron projection"/>
    <property type="evidence" value="ECO:0000318"/>
    <property type="project" value="GO_Central"/>
</dbReference>
<dbReference type="GO" id="GO:0005634">
    <property type="term" value="C:nucleus"/>
    <property type="evidence" value="ECO:0000318"/>
    <property type="project" value="GO_Central"/>
</dbReference>
<dbReference type="GO" id="GO:0045202">
    <property type="term" value="C:synapse"/>
    <property type="evidence" value="ECO:0000318"/>
    <property type="project" value="GO_Central"/>
</dbReference>
<dbReference type="GO" id="GO:0003730">
    <property type="term" value="F:mRNA 3'-UTR binding"/>
    <property type="evidence" value="ECO:0000318"/>
    <property type="project" value="GO_Central"/>
</dbReference>
<dbReference type="GO" id="GO:0000900">
    <property type="term" value="F:mRNA regulatory element binding translation repressor activity"/>
    <property type="evidence" value="ECO:0000318"/>
    <property type="project" value="GO_Central"/>
</dbReference>
<dbReference type="GO" id="GO:0043022">
    <property type="term" value="F:ribosome binding"/>
    <property type="evidence" value="ECO:0000318"/>
    <property type="project" value="GO_Central"/>
</dbReference>
<dbReference type="GO" id="GO:0008135">
    <property type="term" value="F:translation factor activity, RNA binding"/>
    <property type="evidence" value="ECO:0000318"/>
    <property type="project" value="GO_Central"/>
</dbReference>
<dbReference type="GO" id="GO:2000766">
    <property type="term" value="P:negative regulation of cytoplasmic translation"/>
    <property type="evidence" value="ECO:0000318"/>
    <property type="project" value="GO_Central"/>
</dbReference>
<dbReference type="CDD" id="cd19757">
    <property type="entry name" value="Bbox1"/>
    <property type="match status" value="1"/>
</dbReference>
<dbReference type="CDD" id="cd12723">
    <property type="entry name" value="RRM1_CPEB1"/>
    <property type="match status" value="1"/>
</dbReference>
<dbReference type="CDD" id="cd12725">
    <property type="entry name" value="RRM2_CPEB1"/>
    <property type="match status" value="1"/>
</dbReference>
<dbReference type="FunFam" id="3.30.70.330:FF:000483">
    <property type="entry name" value="Cytoplasmic polyadenylation element-binding protein 2"/>
    <property type="match status" value="1"/>
</dbReference>
<dbReference type="FunFam" id="3.30.70.330:FF:000677">
    <property type="entry name" value="Cytoplasmic polyadenylation element-binding protein 3"/>
    <property type="match status" value="1"/>
</dbReference>
<dbReference type="Gene3D" id="3.30.70.330">
    <property type="match status" value="2"/>
</dbReference>
<dbReference type="Gene3D" id="4.10.640.40">
    <property type="entry name" value="Cytoplasmic polyadenylation element-binding protein, ZZ domain"/>
    <property type="match status" value="1"/>
</dbReference>
<dbReference type="InterPro" id="IPR032296">
    <property type="entry name" value="CEBP_ZZ"/>
</dbReference>
<dbReference type="InterPro" id="IPR038446">
    <property type="entry name" value="CEBP_ZZ_sf"/>
</dbReference>
<dbReference type="InterPro" id="IPR034819">
    <property type="entry name" value="CPEB"/>
</dbReference>
<dbReference type="InterPro" id="IPR034977">
    <property type="entry name" value="CPEB1_RRM1"/>
</dbReference>
<dbReference type="InterPro" id="IPR012677">
    <property type="entry name" value="Nucleotide-bd_a/b_plait_sf"/>
</dbReference>
<dbReference type="InterPro" id="IPR035979">
    <property type="entry name" value="RBD_domain_sf"/>
</dbReference>
<dbReference type="InterPro" id="IPR000504">
    <property type="entry name" value="RRM_dom"/>
</dbReference>
<dbReference type="PANTHER" id="PTHR12566">
    <property type="entry name" value="CYTOPLASMIC POLYADENYLATION ELEMENT BINDING PROTEIN CPEB"/>
    <property type="match status" value="1"/>
</dbReference>
<dbReference type="PANTHER" id="PTHR12566:SF9">
    <property type="entry name" value="CYTOPLASMIC POLYADENYLATION ELEMENT-BINDING PROTEIN 1"/>
    <property type="match status" value="1"/>
</dbReference>
<dbReference type="Pfam" id="PF16366">
    <property type="entry name" value="CEBP_ZZ"/>
    <property type="match status" value="1"/>
</dbReference>
<dbReference type="Pfam" id="PF16367">
    <property type="entry name" value="RRM_7"/>
    <property type="match status" value="1"/>
</dbReference>
<dbReference type="SUPFAM" id="SSF54928">
    <property type="entry name" value="RNA-binding domain, RBD"/>
    <property type="match status" value="1"/>
</dbReference>
<sequence>MNLNDRVEGIGNERSIVAKSTERKNKIPPSLKLSPVESVGEKSPTPATVYDLFKKYHKSDSVKPTEEDNMNVGFDKLSTDEKNGFLRKLQMLTVGSKKSSKVDESTPSPANRLLKKIVPSRRTSTEHPNSSNRMHIFGSSRTTKKSIDSERNSQRKKSARRLNFERDAEQKKDSTKTNNSSFVAEMTREYEKIVISKGAPVPINKANRNLYRNPRGSLETPTDSPQKGFSSSTESSPSDSMNQFPSREHFTSANEESPMKRKNFQQEHGNKNRDSDATWFGELPPRDYTSPTFSRKIFVGGVPWDITEAALKDSFGEFGSCAVEWPGQEARYRSGQSNLAPSNGSLRAQTKYTGQAATGYVYMIFEDERAVASLLHECSQEIGGAGEWYFKIRAQRSKSTEIRQVQIIPWVTSDSMFCEDDTLLETGIEPKRTVFVGALHGMMTAQVLHSIMEDCFGAVECVQLDTDKFKYPIGSGRVTFREHGAYFKAIEMGYLHVYTSKFRKRVQIDPFLESTCCMVCNSQSAHCFCRNKNCFKYYCHNCWALDHGKDDDQEVHIPVIVPSSASKAFPGATTRRSQVSSSLSLKNGSNNSQVNNSIPHFPSAGFPIIVGAPAQTLSALYGYIQNGQQLLKPAVFEPPMTPSPSEINKNRRSFTEFSTPPTVFFNSTPVISPQKSVSDGSPLPAYYNSAAFLTPPPTYYGSPNHPTSSNISQPQQPYYGANLYYGFIPPQQHPSAMMRSPNYGQ</sequence>
<reference key="1">
    <citation type="journal article" date="1998" name="Science">
        <title>Genome sequence of the nematode C. elegans: a platform for investigating biology.</title>
        <authorList>
            <consortium name="The C. elegans sequencing consortium"/>
        </authorList>
    </citation>
    <scope>NUCLEOTIDE SEQUENCE [LARGE SCALE GENOMIC DNA]</scope>
    <source>
        <strain>Bristol N2</strain>
    </source>
</reference>
<reference key="2">
    <citation type="journal article" date="2000" name="Genes Dev.">
        <title>CPEB proteins control two key steps in spermatogenesis in C. elegans.</title>
        <authorList>
            <person name="Luitjens C."/>
            <person name="Gallegos M."/>
            <person name="Kraemer B."/>
            <person name="Kimble J."/>
            <person name="Wickens M."/>
        </authorList>
    </citation>
    <scope>FUNCTION</scope>
    <scope>DEVELOPMENTAL STAGE</scope>
</reference>
<organism>
    <name type="scientific">Caenorhabditis elegans</name>
    <dbReference type="NCBI Taxonomy" id="6239"/>
    <lineage>
        <taxon>Eukaryota</taxon>
        <taxon>Metazoa</taxon>
        <taxon>Ecdysozoa</taxon>
        <taxon>Nematoda</taxon>
        <taxon>Chromadorea</taxon>
        <taxon>Rhabditida</taxon>
        <taxon>Rhabditina</taxon>
        <taxon>Rhabditomorpha</taxon>
        <taxon>Rhabditoidea</taxon>
        <taxon>Rhabditidae</taxon>
        <taxon>Peloderinae</taxon>
        <taxon>Caenorhabditis</taxon>
    </lineage>
</organism>
<accession>O01835</accession>